<gene>
    <name evidence="1" type="primary">sepS</name>
    <name type="ordered locus">MMP0688</name>
</gene>
<proteinExistence type="evidence at protein level"/>
<name>SEPS_METMP</name>
<feature type="chain" id="PRO_0000363750" description="O-phosphoserine--tRNA(Cys) ligase">
    <location>
        <begin position="1"/>
        <end position="537"/>
    </location>
</feature>
<feature type="binding site" evidence="1">
    <location>
        <begin position="186"/>
        <end position="188"/>
    </location>
    <ligand>
        <name>substrate</name>
    </ligand>
</feature>
<feature type="binding site" evidence="1">
    <location>
        <begin position="231"/>
        <end position="233"/>
    </location>
    <ligand>
        <name>substrate</name>
    </ligand>
</feature>
<feature type="binding site" evidence="1">
    <location>
        <begin position="273"/>
        <end position="274"/>
    </location>
    <ligand>
        <name>substrate</name>
    </ligand>
</feature>
<feature type="binding site" evidence="1">
    <location>
        <position position="317"/>
    </location>
    <ligand>
        <name>substrate</name>
    </ligand>
</feature>
<feature type="helix" evidence="2">
    <location>
        <begin position="5"/>
        <end position="13"/>
    </location>
</feature>
<feature type="helix" evidence="2">
    <location>
        <begin position="15"/>
        <end position="22"/>
    </location>
</feature>
<feature type="helix" evidence="2">
    <location>
        <begin position="23"/>
        <end position="25"/>
    </location>
</feature>
<feature type="turn" evidence="2">
    <location>
        <begin position="31"/>
        <end position="33"/>
    </location>
</feature>
<feature type="helix" evidence="2">
    <location>
        <begin position="35"/>
        <end position="37"/>
    </location>
</feature>
<feature type="helix" evidence="2">
    <location>
        <begin position="47"/>
        <end position="61"/>
    </location>
</feature>
<feature type="strand" evidence="2">
    <location>
        <begin position="71"/>
        <end position="74"/>
    </location>
</feature>
<feature type="helix" evidence="2">
    <location>
        <begin position="75"/>
        <end position="82"/>
    </location>
</feature>
<feature type="helix" evidence="2">
    <location>
        <begin position="83"/>
        <end position="85"/>
    </location>
</feature>
<feature type="helix" evidence="2">
    <location>
        <begin position="86"/>
        <end position="91"/>
    </location>
</feature>
<feature type="strand" evidence="2">
    <location>
        <begin position="94"/>
        <end position="98"/>
    </location>
</feature>
<feature type="strand" evidence="2">
    <location>
        <begin position="180"/>
        <end position="183"/>
    </location>
</feature>
<feature type="helix" evidence="2">
    <location>
        <begin position="188"/>
        <end position="198"/>
    </location>
</feature>
<feature type="turn" evidence="2">
    <location>
        <begin position="199"/>
        <end position="201"/>
    </location>
</feature>
<feature type="strand" evidence="2">
    <location>
        <begin position="206"/>
        <end position="215"/>
    </location>
</feature>
<feature type="strand" evidence="2">
    <location>
        <begin position="227"/>
        <end position="237"/>
    </location>
</feature>
<feature type="helix" evidence="2">
    <location>
        <begin position="243"/>
        <end position="255"/>
    </location>
</feature>
<feature type="turn" evidence="2">
    <location>
        <begin position="256"/>
        <end position="258"/>
    </location>
</feature>
<feature type="strand" evidence="2">
    <location>
        <begin position="262"/>
        <end position="266"/>
    </location>
</feature>
<feature type="strand" evidence="2">
    <location>
        <begin position="280"/>
        <end position="286"/>
    </location>
</feature>
<feature type="turn" evidence="2">
    <location>
        <begin position="287"/>
        <end position="290"/>
    </location>
</feature>
<feature type="strand" evidence="2">
    <location>
        <begin position="291"/>
        <end position="301"/>
    </location>
</feature>
<feature type="helix" evidence="2">
    <location>
        <begin position="303"/>
        <end position="308"/>
    </location>
</feature>
<feature type="strand" evidence="2">
    <location>
        <begin position="315"/>
        <end position="321"/>
    </location>
</feature>
<feature type="helix" evidence="2">
    <location>
        <begin position="322"/>
        <end position="329"/>
    </location>
</feature>
<feature type="helix" evidence="2">
    <location>
        <begin position="335"/>
        <end position="339"/>
    </location>
</feature>
<feature type="helix" evidence="2">
    <location>
        <begin position="341"/>
        <end position="343"/>
    </location>
</feature>
<feature type="helix" evidence="2">
    <location>
        <begin position="350"/>
        <end position="354"/>
    </location>
</feature>
<feature type="strand" evidence="2">
    <location>
        <begin position="357"/>
        <end position="360"/>
    </location>
</feature>
<feature type="helix" evidence="2">
    <location>
        <begin position="366"/>
        <end position="381"/>
    </location>
</feature>
<feature type="strand" evidence="2">
    <location>
        <begin position="427"/>
        <end position="431"/>
    </location>
</feature>
<feature type="helix" evidence="2">
    <location>
        <begin position="450"/>
        <end position="459"/>
    </location>
</feature>
<feature type="strand" evidence="2">
    <location>
        <begin position="460"/>
        <end position="466"/>
    </location>
</feature>
<feature type="helix" evidence="2">
    <location>
        <begin position="467"/>
        <end position="481"/>
    </location>
</feature>
<feature type="strand" evidence="2">
    <location>
        <begin position="505"/>
        <end position="507"/>
    </location>
</feature>
<feature type="helix" evidence="2">
    <location>
        <begin position="509"/>
        <end position="517"/>
    </location>
</feature>
<dbReference type="EC" id="6.1.1.27" evidence="1"/>
<dbReference type="EMBL" id="BX950229">
    <property type="protein sequence ID" value="CAF30244.1"/>
    <property type="molecule type" value="Genomic_DNA"/>
</dbReference>
<dbReference type="RefSeq" id="WP_011170632.1">
    <property type="nucleotide sequence ID" value="NC_005791.1"/>
</dbReference>
<dbReference type="PDB" id="2ODR">
    <property type="method" value="X-ray"/>
    <property type="resolution" value="3.23 A"/>
    <property type="chains" value="A/B/C/D=1-537"/>
</dbReference>
<dbReference type="PDBsum" id="2ODR"/>
<dbReference type="SMR" id="Q6LZE1"/>
<dbReference type="DIP" id="DIP-60876N"/>
<dbReference type="STRING" id="267377.MMP0688"/>
<dbReference type="EnsemblBacteria" id="CAF30244">
    <property type="protein sequence ID" value="CAF30244"/>
    <property type="gene ID" value="MMP0688"/>
</dbReference>
<dbReference type="GeneID" id="2762711"/>
<dbReference type="KEGG" id="mmp:MMP0688"/>
<dbReference type="PATRIC" id="fig|267377.15.peg.705"/>
<dbReference type="eggNOG" id="arCOG00411">
    <property type="taxonomic scope" value="Archaea"/>
</dbReference>
<dbReference type="HOGENOM" id="CLU_506822_0_0_2"/>
<dbReference type="OrthoDB" id="145125at2157"/>
<dbReference type="BRENDA" id="6.1.1.27">
    <property type="organism ID" value="3262"/>
</dbReference>
<dbReference type="EvolutionaryTrace" id="Q6LZE1"/>
<dbReference type="Proteomes" id="UP000000590">
    <property type="component" value="Chromosome"/>
</dbReference>
<dbReference type="GO" id="GO:0005524">
    <property type="term" value="F:ATP binding"/>
    <property type="evidence" value="ECO:0007669"/>
    <property type="project" value="UniProtKB-UniRule"/>
</dbReference>
<dbReference type="GO" id="GO:0043816">
    <property type="term" value="F:phosphoserine-tRNA(Cys) ligase activity"/>
    <property type="evidence" value="ECO:0007669"/>
    <property type="project" value="UniProtKB-EC"/>
</dbReference>
<dbReference type="GO" id="GO:0000049">
    <property type="term" value="F:tRNA binding"/>
    <property type="evidence" value="ECO:0007669"/>
    <property type="project" value="InterPro"/>
</dbReference>
<dbReference type="GO" id="GO:0006412">
    <property type="term" value="P:translation"/>
    <property type="evidence" value="ECO:0007669"/>
    <property type="project" value="UniProtKB-KW"/>
</dbReference>
<dbReference type="GO" id="GO:0043039">
    <property type="term" value="P:tRNA aminoacylation"/>
    <property type="evidence" value="ECO:0007669"/>
    <property type="project" value="UniProtKB-UniRule"/>
</dbReference>
<dbReference type="Gene3D" id="6.10.250.3340">
    <property type="match status" value="3"/>
</dbReference>
<dbReference type="Gene3D" id="6.20.250.20">
    <property type="match status" value="1"/>
</dbReference>
<dbReference type="Gene3D" id="3.30.930.10">
    <property type="entry name" value="Bira Bifunctional Protein, Domain 2"/>
    <property type="match status" value="1"/>
</dbReference>
<dbReference type="HAMAP" id="MF_01674">
    <property type="entry name" value="Sep_tRNA_synth"/>
    <property type="match status" value="1"/>
</dbReference>
<dbReference type="InterPro" id="IPR006195">
    <property type="entry name" value="aa-tRNA-synth_II"/>
</dbReference>
<dbReference type="InterPro" id="IPR045864">
    <property type="entry name" value="aa-tRNA-synth_II/BPL/LPL"/>
</dbReference>
<dbReference type="InterPro" id="IPR005246">
    <property type="entry name" value="O-Pseryl-tRNA(Cys)_ligase"/>
</dbReference>
<dbReference type="InterPro" id="IPR002319">
    <property type="entry name" value="Phenylalanyl-tRNA_Synthase"/>
</dbReference>
<dbReference type="InterPro" id="IPR041590">
    <property type="entry name" value="SepRS_C"/>
</dbReference>
<dbReference type="NCBIfam" id="TIGR00470">
    <property type="entry name" value="sepS"/>
    <property type="match status" value="1"/>
</dbReference>
<dbReference type="Pfam" id="PF18006">
    <property type="entry name" value="SepRS_C"/>
    <property type="match status" value="1"/>
</dbReference>
<dbReference type="Pfam" id="PF01409">
    <property type="entry name" value="tRNA-synt_2d"/>
    <property type="match status" value="1"/>
</dbReference>
<dbReference type="SUPFAM" id="SSF55681">
    <property type="entry name" value="Class II aaRS and biotin synthetases"/>
    <property type="match status" value="1"/>
</dbReference>
<dbReference type="PROSITE" id="PS50862">
    <property type="entry name" value="AA_TRNA_LIGASE_II"/>
    <property type="match status" value="1"/>
</dbReference>
<sequence>MFKREEIIEMANKDFEKAWIETKDLIKAKKINESYPRIKPVFGKTHPVNDTIENLRQAYLRMGFEEYINPVIVDERDIYKQFGPEAMAVLDRCFYLAGLPRPDVGLSDEKISQIEKLGIKVSEHKESLQKILHGYKKGTLDGDDLVLEISNALEISSEMGLKILEDVFPEFKDLTAVSSKLTLRSHMTSGWFLTVSDLMNKKPLPFKLFSIDRCFRREQKEDKSHLMTYHSASCAIAGEGVDINDGKAIAEGLLSQFGFTNFKFIPDEKKSKYYTPETQTEVYAYHPKLKEWLEVATFGVYSPVALSKYGIDVPVMNLGLGVERLAMISGNFADVREMVYPQFYEHKLNDRNVASMVKLDKVPVMDEIYDLTKELIESCVKNKDLKSPCELAIEKTFSFGKTKKNVKINIFEKEEGKNLLGPSILNEIYVYDGNVIGIPESFDGVKEEFKDFLEKGKSEGVATGIRYIDALCFKITSKLEEAFVSNTTEFKVKVPIVRSLSDINLKIDDIALKQIMSKNKVIDVRGPVFLNVEVKIE</sequence>
<comment type="function">
    <text evidence="1">Catalyzes the attachment of O-phosphoserine (Sep) to tRNA(Cys).</text>
</comment>
<comment type="catalytic activity">
    <reaction evidence="1">
        <text>tRNA(Cys) + O-phospho-L-serine + ATP = O-phospho-L-seryl-tRNA(Cys) + AMP + diphosphate</text>
        <dbReference type="Rhea" id="RHEA:25678"/>
        <dbReference type="Rhea" id="RHEA-COMP:9661"/>
        <dbReference type="Rhea" id="RHEA-COMP:9719"/>
        <dbReference type="ChEBI" id="CHEBI:30616"/>
        <dbReference type="ChEBI" id="CHEBI:33019"/>
        <dbReference type="ChEBI" id="CHEBI:57524"/>
        <dbReference type="ChEBI" id="CHEBI:78442"/>
        <dbReference type="ChEBI" id="CHEBI:78551"/>
        <dbReference type="ChEBI" id="CHEBI:456215"/>
        <dbReference type="EC" id="6.1.1.27"/>
    </reaction>
</comment>
<comment type="subunit">
    <text evidence="1">Homotetramer. Interacts with SepCysS.</text>
</comment>
<comment type="similarity">
    <text evidence="1">Belongs to the class-II aminoacyl-tRNA synthetase family. O-phosphoseryl-tRNA(Cys) synthetase subfamily.</text>
</comment>
<keyword id="KW-0002">3D-structure</keyword>
<keyword id="KW-0030">Aminoacyl-tRNA synthetase</keyword>
<keyword id="KW-0067">ATP-binding</keyword>
<keyword id="KW-0436">Ligase</keyword>
<keyword id="KW-0547">Nucleotide-binding</keyword>
<keyword id="KW-0648">Protein biosynthesis</keyword>
<keyword id="KW-1185">Reference proteome</keyword>
<reference key="1">
    <citation type="journal article" date="2004" name="J. Bacteriol.">
        <title>Complete genome sequence of the genetically tractable hydrogenotrophic methanogen Methanococcus maripaludis.</title>
        <authorList>
            <person name="Hendrickson E.L."/>
            <person name="Kaul R."/>
            <person name="Zhou Y."/>
            <person name="Bovee D."/>
            <person name="Chapman P."/>
            <person name="Chung J."/>
            <person name="Conway de Macario E."/>
            <person name="Dodsworth J.A."/>
            <person name="Gillett W."/>
            <person name="Graham D.E."/>
            <person name="Hackett M."/>
            <person name="Haydock A.K."/>
            <person name="Kang A."/>
            <person name="Land M.L."/>
            <person name="Levy R."/>
            <person name="Lie T.J."/>
            <person name="Major T.A."/>
            <person name="Moore B.C."/>
            <person name="Porat I."/>
            <person name="Palmeiri A."/>
            <person name="Rouse G."/>
            <person name="Saenphimmachak C."/>
            <person name="Soell D."/>
            <person name="Van Dien S."/>
            <person name="Wang T."/>
            <person name="Whitman W.B."/>
            <person name="Xia Q."/>
            <person name="Zhang Y."/>
            <person name="Larimer F.W."/>
            <person name="Olson M.V."/>
            <person name="Leigh J.A."/>
        </authorList>
    </citation>
    <scope>NUCLEOTIDE SEQUENCE [LARGE SCALE GENOMIC DNA]</scope>
    <source>
        <strain>DSM 14266 / JCM 13030 / NBRC 101832 / S2 / LL</strain>
    </source>
</reference>
<evidence type="ECO:0000255" key="1">
    <source>
        <dbReference type="HAMAP-Rule" id="MF_01674"/>
    </source>
</evidence>
<evidence type="ECO:0007829" key="2">
    <source>
        <dbReference type="PDB" id="2ODR"/>
    </source>
</evidence>
<accession>Q6LZE1</accession>
<protein>
    <recommendedName>
        <fullName evidence="1">O-phosphoserine--tRNA(Cys) ligase</fullName>
        <shortName evidence="1">O-phosphoserine--tRNA ligase</shortName>
        <ecNumber evidence="1">6.1.1.27</ecNumber>
    </recommendedName>
    <alternativeName>
        <fullName evidence="1">Non-canonical O-phosphoseryl-tRNA(Cys) synthetase</fullName>
    </alternativeName>
    <alternativeName>
        <fullName evidence="1">O-phosphoseryl-tRNA(Cys) synthetase</fullName>
        <shortName evidence="1">SepRS</shortName>
    </alternativeName>
</protein>
<organism>
    <name type="scientific">Methanococcus maripaludis (strain DSM 14266 / JCM 13030 / NBRC 101832 / S2 / LL)</name>
    <dbReference type="NCBI Taxonomy" id="267377"/>
    <lineage>
        <taxon>Archaea</taxon>
        <taxon>Methanobacteriati</taxon>
        <taxon>Methanobacteriota</taxon>
        <taxon>Methanomada group</taxon>
        <taxon>Methanococci</taxon>
        <taxon>Methanococcales</taxon>
        <taxon>Methanococcaceae</taxon>
        <taxon>Methanococcus</taxon>
    </lineage>
</organism>